<comment type="function">
    <text evidence="2 3 4 5 6">Epimerase required for the biosynthesis of the B-band O antigen of serotype O6 lipopolysaccharide (PubMed:10627048). Catalyzes the reversible epimerization of UDP-N-acetylglucosaminuronic acid (UDP-GlcNAcA) to UDP-N-acetylgalactosaminuronic acid (UDP-GalNAcA) (PubMed:18065759). Also catalyzes the reversible epimerization of UDP-N-acetylglucosamine (UDP-GlcNAc) to UDP-N-acetylgalactosamine (UDP-GalNAc) (PubMed:10747995, PubMed:15016816, PubMed:15752069). Has very low epimerase activity with UDP-glucose (UDP-Glc) and UDP-galactose (UDP-Gal) (PubMed:10747995, PubMed:15016816, PubMed:15752069).</text>
</comment>
<comment type="catalytic activity">
    <reaction evidence="6">
        <text>UDP-2-acetamido-2-deoxy-alpha-D-glucuronate = UDP-2-acetamido-2-deoxy-alpha-D-galacturonate</text>
        <dbReference type="Rhea" id="RHEA:81511"/>
        <dbReference type="ChEBI" id="CHEBI:65040"/>
        <dbReference type="ChEBI" id="CHEBI:231899"/>
        <dbReference type="EC" id="5.1.3.45"/>
    </reaction>
    <physiologicalReaction direction="left-to-right" evidence="6">
        <dbReference type="Rhea" id="RHEA:81512"/>
    </physiologicalReaction>
</comment>
<comment type="catalytic activity">
    <reaction evidence="3 4 5">
        <text>UDP-N-acetyl-alpha-D-glucosamine = UDP-N-acetyl-alpha-D-galactosamine</text>
        <dbReference type="Rhea" id="RHEA:20517"/>
        <dbReference type="ChEBI" id="CHEBI:57705"/>
        <dbReference type="ChEBI" id="CHEBI:67138"/>
        <dbReference type="EC" id="5.1.3.7"/>
    </reaction>
</comment>
<comment type="cofactor">
    <cofactor evidence="3 4">
        <name>NAD(+)</name>
        <dbReference type="ChEBI" id="CHEBI:57540"/>
    </cofactor>
</comment>
<comment type="biophysicochemical properties">
    <kinetics>
        <KM evidence="3">197 uM for UDP-N-acetylgalactosamine</KM>
        <KM evidence="3">224 uM for UDP-N-acetylglucosamine</KM>
        <KM evidence="3">251 uM for UDP-galactose</KM>
        <KM evidence="3">237 uM for UDP-glucose</KM>
        <text evidence="3">kcat is 271 min(-1) with UDP-N-acetylgalactosamine as substrate. kcat is 120 min(-1) with UDP-N-acetylglucosamine as substrate. kcat is 0.188 min(-1) with UDP-galactose as substrate. kcat is 0.124 min(-1) with UDP-glucose as substrate.</text>
    </kinetics>
    <phDependence>
        <text evidence="3">Optimum pH is between 7 and 8.</text>
    </phDependence>
    <temperatureDependence>
        <text evidence="3">Optimum temperature is between 37 and 42 degrees Celsius.</text>
    </temperatureDependence>
</comment>
<comment type="pathway">
    <text evidence="2 12">Bacterial outer membrane biogenesis; LPS O-antigen biosynthesis.</text>
</comment>
<comment type="subunit">
    <text evidence="3 4">Homodimer.</text>
</comment>
<comment type="disruption phenotype">
    <text evidence="2 6">Deletion of the gene causes deficiency in B-band O antigen biosynthesis (PubMed:10627048). Mutation does not affect flagellin glycosylation (PubMed:18065759).</text>
</comment>
<comment type="miscellaneous">
    <text evidence="6">Whereas either WbpO or WbpP could initiate the two-step biosynthetic pathway of UDP-GalNAcA, the kinetic parameters of the two enzymes indicate that WbpO acts preferentially before WpbP.</text>
</comment>
<comment type="similarity">
    <text evidence="11">Belongs to the NAD(P)-dependent epimerase/dehydratase family.</text>
</comment>
<reference evidence="13" key="1">
    <citation type="journal article" date="1999" name="Microbiology">
        <title>Functional analysis of genes responsible for the synthesis of the B-band O antigen of Pseudomonas aeruginosa serotype O6 lipopolysaccharide.</title>
        <authorList>
            <person name="Belanger M."/>
            <person name="Burrows L.L."/>
            <person name="Lam J.S."/>
        </authorList>
    </citation>
    <scope>NUCLEOTIDE SEQUENCE [GENOMIC DNA]</scope>
    <scope>FUNCTION</scope>
    <scope>PATHWAY</scope>
    <scope>DISRUPTION PHENOTYPE</scope>
    <source>
        <strain>ATCC 33354 / Serotype O6</strain>
    </source>
</reference>
<reference evidence="14" key="2">
    <citation type="journal article" date="2002" name="J. Bacteriol.">
        <title>Genetic variation at the O-antigen biosynthetic locus in Pseudomonas aeruginosa.</title>
        <authorList>
            <person name="Raymond C.K."/>
            <person name="Sims E.H."/>
            <person name="Kas A."/>
            <person name="Spencer D.H."/>
            <person name="Kutyavin T.V."/>
            <person name="Ivey R.G."/>
            <person name="Zhou Y."/>
            <person name="Kaul R."/>
            <person name="Clendenning J.B."/>
            <person name="Olson M.V."/>
        </authorList>
    </citation>
    <scope>NUCLEOTIDE SEQUENCE [GENOMIC DNA]</scope>
    <source>
        <strain>Serotype O6</strain>
    </source>
</reference>
<reference key="3">
    <citation type="journal article" date="2000" name="J. Biol. Chem.">
        <title>Expression, purification, and biochemical characterization of WbpP, a new UDP-GlcNAc C4 epimerase from Pseudomonas aeruginosa serotype O6.</title>
        <authorList>
            <person name="Creuzenet C."/>
            <person name="Belanger M."/>
            <person name="Wakarchuk W.W."/>
            <person name="Lam J.S."/>
        </authorList>
    </citation>
    <scope>FUNCTION</scope>
    <scope>CATALYTIC ACTIVITY</scope>
    <scope>COFACTOR</scope>
    <scope>BIOPHYSICOCHEMICAL PROPERTIES</scope>
    <scope>SUBUNIT</scope>
    <source>
        <strain>Serotype O6</strain>
    </source>
</reference>
<reference key="4">
    <citation type="journal article" date="2005" name="Biochem. J.">
        <title>Towards a better understanding of the substrate specificity of the UDP-N-acetylglucosamine C4 epimerase WbpP.</title>
        <authorList>
            <person name="Demendi M."/>
            <person name="Ishiyama N."/>
            <person name="Lam J.S."/>
            <person name="Berghuis A.M."/>
            <person name="Creuzenet C."/>
        </authorList>
    </citation>
    <scope>FUNCTION</scope>
    <scope>CATALYTIC ACTIVITY</scope>
    <scope>MUTAGENESIS OF GLY-102; SER-143; SER-144; GLN-201 AND ALA-209</scope>
    <source>
        <strain>Serotype O6</strain>
    </source>
</reference>
<reference key="5">
    <citation type="journal article" date="2008" name="J. Biol. Chem.">
        <title>Flagellin glycosylation in Pseudomonas aeruginosa PAK requires the O-antigen biosynthesis enzyme WbpO.</title>
        <authorList>
            <person name="Miller W.L."/>
            <person name="Matewish M.J."/>
            <person name="McNally D.J."/>
            <person name="Ishiyama N."/>
            <person name="Anderson E.M."/>
            <person name="Brewer D."/>
            <person name="Brisson J.R."/>
            <person name="Berghuis A.M."/>
            <person name="Lam J.S."/>
        </authorList>
    </citation>
    <scope>FUNCTION</scope>
    <scope>CATALYTIC ACTIVITY</scope>
    <scope>DISRUPTION PHENOTYPE</scope>
    <source>
        <strain>PAK / Serotype O6</strain>
    </source>
</reference>
<reference evidence="15 16" key="6">
    <citation type="journal article" date="2004" name="J. Biol. Chem.">
        <title>Crystal structure of WbpP, a genuine UDP-N-acetylglucosamine 4-epimerase from Pseudomonas aeruginosa: substrate specificity in UDP-hexose 4-epimerases.</title>
        <authorList>
            <person name="Ishiyama N."/>
            <person name="Creuzenet C."/>
            <person name="Lam J.S."/>
            <person name="Berghuis A.M."/>
        </authorList>
    </citation>
    <scope>X-RAY CRYSTALLOGRAPHY (2.10 ANGSTROMS) IN COMPLEXES WITH NAD(+); UDP-N-ACETYL-ALPHA-D-GALACTOSAMINE AND UDP-GLUCOSE</scope>
    <scope>FUNCTION</scope>
    <scope>CATALYTIC ACTIVITY</scope>
    <scope>COFACTOR</scope>
    <scope>SUBUNIT</scope>
    <scope>MUTAGENESIS OF ALA-209 AND SER-306</scope>
    <source>
        <strain>Serotype O6</strain>
    </source>
</reference>
<organism>
    <name type="scientific">Pseudomonas aeruginosa</name>
    <dbReference type="NCBI Taxonomy" id="287"/>
    <lineage>
        <taxon>Bacteria</taxon>
        <taxon>Pseudomonadati</taxon>
        <taxon>Pseudomonadota</taxon>
        <taxon>Gammaproteobacteria</taxon>
        <taxon>Pseudomonadales</taxon>
        <taxon>Pseudomonadaceae</taxon>
        <taxon>Pseudomonas</taxon>
    </lineage>
</organism>
<keyword id="KW-0002">3D-structure</keyword>
<keyword id="KW-0961">Cell wall biogenesis/degradation</keyword>
<keyword id="KW-0413">Isomerase</keyword>
<keyword id="KW-0448">Lipopolysaccharide biosynthesis</keyword>
<keyword id="KW-0520">NAD</keyword>
<keyword id="KW-0547">Nucleotide-binding</keyword>
<evidence type="ECO:0000250" key="1">
    <source>
        <dbReference type="UniProtKB" id="P09147"/>
    </source>
</evidence>
<evidence type="ECO:0000269" key="2">
    <source>
    </source>
</evidence>
<evidence type="ECO:0000269" key="3">
    <source>
    </source>
</evidence>
<evidence type="ECO:0000269" key="4">
    <source>
    </source>
</evidence>
<evidence type="ECO:0000269" key="5">
    <source>
    </source>
</evidence>
<evidence type="ECO:0000269" key="6">
    <source>
    </source>
</evidence>
<evidence type="ECO:0000303" key="7">
    <source>
    </source>
</evidence>
<evidence type="ECO:0000303" key="8">
    <source>
    </source>
</evidence>
<evidence type="ECO:0000303" key="9">
    <source>
    </source>
</evidence>
<evidence type="ECO:0000303" key="10">
    <source>
    </source>
</evidence>
<evidence type="ECO:0000305" key="11"/>
<evidence type="ECO:0000305" key="12">
    <source>
    </source>
</evidence>
<evidence type="ECO:0000312" key="13">
    <source>
        <dbReference type="EMBL" id="AAF23998.1"/>
    </source>
</evidence>
<evidence type="ECO:0000312" key="14">
    <source>
        <dbReference type="EMBL" id="AAM27817.1"/>
    </source>
</evidence>
<evidence type="ECO:0007744" key="15">
    <source>
        <dbReference type="PDB" id="1SB8"/>
    </source>
</evidence>
<evidence type="ECO:0007744" key="16">
    <source>
        <dbReference type="PDB" id="1SB9"/>
    </source>
</evidence>
<evidence type="ECO:0007829" key="17">
    <source>
        <dbReference type="PDB" id="1SB8"/>
    </source>
</evidence>
<sequence>MMSRYEELRKELPAQPKVWLITGVAGFIGSNLLETLLKLDQKVVGLDNFATGHQRNLDEVRSLVSEKQWSNFKFIQGDIRNLDDCNNACAGVDYVLHQAALGSVPRSINDPITSNATNIDGFLNMLIAARDAKVQSFTYAASSSTYGDHPGLPKVEDTIGKPLSPYAVTKYVNELYADVFSRCYGFSTIGLRYFNVFGRRQDPNGAYAAVIPKWTSSMIQGDDVYINGDGETSRDFCYIENTVQANLLAATAGLDARNQVYNIAVGGRTSLNQLFFALRDGLAENGVSYHREPVYRDFREGDVRHSLADISKAAKLLGYAPKYDVSAGVALAMPWYIMFLK</sequence>
<protein>
    <recommendedName>
        <fullName evidence="11">UDP-N-acetyl-alpha-D-glucosaminouronate 4-epimerase</fullName>
        <shortName evidence="11">UDP-GlcNAcA 4-epimerase</shortName>
        <ecNumber evidence="6">5.1.3.45</ecNumber>
    </recommendedName>
    <alternativeName>
        <fullName evidence="10">UDP-N-acetylglucosamine C4 epimerase</fullName>
        <shortName evidence="8">UDP-GlcNAc C4 epimerase</shortName>
        <ecNumber evidence="3 4 5">5.1.3.7</ecNumber>
    </alternativeName>
</protein>
<name>WBPP_PSEAI</name>
<gene>
    <name evidence="7 9" type="primary">wbpP</name>
</gene>
<feature type="chain" id="PRO_0000461784" description="UDP-N-acetyl-alpha-D-glucosaminouronate 4-epimerase">
    <location>
        <begin position="1"/>
        <end position="341"/>
    </location>
</feature>
<feature type="active site" description="Proton acceptor" evidence="1">
    <location>
        <position position="166"/>
    </location>
</feature>
<feature type="binding site" evidence="4 15 16">
    <location>
        <position position="27"/>
    </location>
    <ligand>
        <name>NAD(+)</name>
        <dbReference type="ChEBI" id="CHEBI:57540"/>
    </ligand>
</feature>
<feature type="binding site" evidence="4 15 16">
    <location>
        <position position="28"/>
    </location>
    <ligand>
        <name>NAD(+)</name>
        <dbReference type="ChEBI" id="CHEBI:57540"/>
    </ligand>
</feature>
<feature type="binding site" evidence="4 15 16">
    <location>
        <position position="47"/>
    </location>
    <ligand>
        <name>NAD(+)</name>
        <dbReference type="ChEBI" id="CHEBI:57540"/>
    </ligand>
</feature>
<feature type="binding site" evidence="4 15 16">
    <location>
        <position position="50"/>
    </location>
    <ligand>
        <name>NAD(+)</name>
        <dbReference type="ChEBI" id="CHEBI:57540"/>
    </ligand>
</feature>
<feature type="binding site" evidence="4 15 16">
    <location>
        <position position="51"/>
    </location>
    <ligand>
        <name>NAD(+)</name>
        <dbReference type="ChEBI" id="CHEBI:57540"/>
    </ligand>
</feature>
<feature type="binding site" evidence="4 15 16">
    <location>
        <position position="52"/>
    </location>
    <ligand>
        <name>NAD(+)</name>
        <dbReference type="ChEBI" id="CHEBI:57540"/>
    </ligand>
</feature>
<feature type="binding site" evidence="4 15 16">
    <location>
        <position position="78"/>
    </location>
    <ligand>
        <name>NAD(+)</name>
        <dbReference type="ChEBI" id="CHEBI:57540"/>
    </ligand>
</feature>
<feature type="binding site" evidence="4 15 16">
    <location>
        <position position="79"/>
    </location>
    <ligand>
        <name>NAD(+)</name>
        <dbReference type="ChEBI" id="CHEBI:57540"/>
    </ligand>
</feature>
<feature type="binding site" evidence="4 15 16">
    <location>
        <position position="98"/>
    </location>
    <ligand>
        <name>NAD(+)</name>
        <dbReference type="ChEBI" id="CHEBI:57540"/>
    </ligand>
</feature>
<feature type="binding site" evidence="4 15">
    <location>
        <position position="103"/>
    </location>
    <ligand>
        <name>UDP-N-acetyl-alpha-D-galactosamine</name>
        <dbReference type="ChEBI" id="CHEBI:67138"/>
    </ligand>
</feature>
<feature type="binding site" evidence="4 15 16">
    <location>
        <position position="117"/>
    </location>
    <ligand>
        <name>NAD(+)</name>
        <dbReference type="ChEBI" id="CHEBI:57540"/>
    </ligand>
</feature>
<feature type="binding site" evidence="4 15">
    <location>
        <position position="142"/>
    </location>
    <ligand>
        <name>UDP-N-acetyl-alpha-D-galactosamine</name>
        <dbReference type="ChEBI" id="CHEBI:67138"/>
    </ligand>
</feature>
<feature type="binding site" evidence="4 15">
    <location>
        <position position="143"/>
    </location>
    <ligand>
        <name>UDP-N-acetyl-alpha-D-galactosamine</name>
        <dbReference type="ChEBI" id="CHEBI:67138"/>
    </ligand>
</feature>
<feature type="binding site" evidence="4 15 16">
    <location>
        <position position="166"/>
    </location>
    <ligand>
        <name>NAD(+)</name>
        <dbReference type="ChEBI" id="CHEBI:57540"/>
    </ligand>
</feature>
<feature type="binding site" evidence="4 15">
    <location>
        <position position="166"/>
    </location>
    <ligand>
        <name>UDP-N-acetyl-alpha-D-galactosamine</name>
        <dbReference type="ChEBI" id="CHEBI:67138"/>
    </ligand>
</feature>
<feature type="binding site" evidence="4 15 16">
    <location>
        <position position="170"/>
    </location>
    <ligand>
        <name>NAD(+)</name>
        <dbReference type="ChEBI" id="CHEBI:57540"/>
    </ligand>
</feature>
<feature type="binding site" evidence="4 15">
    <location>
        <position position="195"/>
    </location>
    <ligand>
        <name>UDP-N-acetyl-alpha-D-galactosamine</name>
        <dbReference type="ChEBI" id="CHEBI:67138"/>
    </ligand>
</feature>
<feature type="binding site" evidence="4 15 16">
    <location>
        <position position="196"/>
    </location>
    <ligand>
        <name>NAD(+)</name>
        <dbReference type="ChEBI" id="CHEBI:57540"/>
    </ligand>
</feature>
<feature type="binding site" evidence="4 15">
    <location>
        <position position="210"/>
    </location>
    <ligand>
        <name>UDP-N-acetyl-alpha-D-galactosamine</name>
        <dbReference type="ChEBI" id="CHEBI:67138"/>
    </ligand>
</feature>
<feature type="binding site" evidence="4 15">
    <location>
        <position position="225"/>
    </location>
    <ligand>
        <name>UDP-N-acetyl-alpha-D-galactosamine</name>
        <dbReference type="ChEBI" id="CHEBI:67138"/>
    </ligand>
</feature>
<feature type="binding site" evidence="4 15">
    <location>
        <position position="227"/>
    </location>
    <ligand>
        <name>UDP-N-acetyl-alpha-D-galactosamine</name>
        <dbReference type="ChEBI" id="CHEBI:67138"/>
    </ligand>
</feature>
<feature type="binding site" evidence="4 15">
    <location>
        <position position="234"/>
    </location>
    <ligand>
        <name>UDP-N-acetyl-alpha-D-galactosamine</name>
        <dbReference type="ChEBI" id="CHEBI:67138"/>
    </ligand>
</feature>
<feature type="binding site" evidence="4 15">
    <location>
        <position position="299"/>
    </location>
    <ligand>
        <name>UDP-N-acetyl-alpha-D-galactosamine</name>
        <dbReference type="ChEBI" id="CHEBI:67138"/>
    </ligand>
</feature>
<feature type="binding site" evidence="4 15">
    <location>
        <position position="302"/>
    </location>
    <ligand>
        <name>UDP-N-acetyl-alpha-D-galactosamine</name>
        <dbReference type="ChEBI" id="CHEBI:67138"/>
    </ligand>
</feature>
<feature type="mutagenesis site" description="Shows a reduced activity towards UDP-GlcNAc while maintaining the same level of activity towards UDP-GalNAc. Loss of activity on UDP-Glc and UDP-Gal." evidence="5">
    <original>G</original>
    <variation>K</variation>
    <location>
        <position position="102"/>
    </location>
</feature>
<feature type="mutagenesis site" description="Shows normal activity on N-acetylated substrates, but shows no activity on UDP-Gal and UDP-Glc." evidence="5">
    <original>S</original>
    <variation>A</variation>
    <location>
        <position position="143"/>
    </location>
</feature>
<feature type="mutagenesis site" description="Loss of activity." evidence="5">
    <original>S</original>
    <variation>K</variation>
    <location>
        <position position="144"/>
    </location>
</feature>
<feature type="mutagenesis site" description="Does not affect conversion of acetylated substrates, but severely impairs the ability to catalyze conversion of non-acetylated substrates, rendering the mutant more specific for N-acetylated substrates than the wild-type." evidence="5">
    <original>Q</original>
    <variation>E</variation>
    <location>
        <position position="201"/>
    </location>
</feature>
<feature type="mutagenesis site" description="Alters substrate specificity. Mutant is much less efficient in catalyzing the epimerization of N-acetylated hexose moieties and is more efficient in catalyzing the reaction for non-acetylated hexoses." evidence="4 5">
    <original>A</original>
    <variation>H</variation>
    <location>
        <position position="209"/>
    </location>
</feature>
<feature type="mutagenesis site" description="Enhances the specificity for acetylated substrates, and this is accompanied by a decrease in catalytic efficiency. Strongly impaired in its ability to use non-acetylated substrates." evidence="5">
    <original>A</original>
    <variation>N</variation>
    <location>
        <position position="209"/>
    </location>
</feature>
<feature type="mutagenesis site" description="Loss of activity." evidence="4">
    <original>S</original>
    <variation>Y</variation>
    <location>
        <position position="306"/>
    </location>
</feature>
<feature type="sequence conflict" description="In Ref. 1; AAF23998." evidence="11" ref="1">
    <original>F</original>
    <variation>S</variation>
    <location>
        <position position="27"/>
    </location>
</feature>
<feature type="sequence conflict" description="In Ref. 1; AAF23998." evidence="11" ref="1">
    <original>V</original>
    <variation>A</variation>
    <location>
        <position position="64"/>
    </location>
</feature>
<feature type="helix" evidence="17">
    <location>
        <begin position="4"/>
        <end position="14"/>
    </location>
</feature>
<feature type="strand" evidence="17">
    <location>
        <begin position="18"/>
        <end position="22"/>
    </location>
</feature>
<feature type="turn" evidence="17">
    <location>
        <begin position="23"/>
        <end position="25"/>
    </location>
</feature>
<feature type="helix" evidence="17">
    <location>
        <begin position="27"/>
        <end position="38"/>
    </location>
</feature>
<feature type="strand" evidence="17">
    <location>
        <begin position="42"/>
        <end position="47"/>
    </location>
</feature>
<feature type="helix" evidence="17">
    <location>
        <begin position="54"/>
        <end position="63"/>
    </location>
</feature>
<feature type="helix" evidence="17">
    <location>
        <begin position="66"/>
        <end position="69"/>
    </location>
</feature>
<feature type="strand" evidence="17">
    <location>
        <begin position="72"/>
        <end position="76"/>
    </location>
</feature>
<feature type="helix" evidence="17">
    <location>
        <begin position="82"/>
        <end position="89"/>
    </location>
</feature>
<feature type="strand" evidence="17">
    <location>
        <begin position="93"/>
        <end position="97"/>
    </location>
</feature>
<feature type="helix" evidence="17">
    <location>
        <begin position="104"/>
        <end position="109"/>
    </location>
</feature>
<feature type="helix" evidence="17">
    <location>
        <begin position="111"/>
        <end position="118"/>
    </location>
</feature>
<feature type="helix" evidence="17">
    <location>
        <begin position="120"/>
        <end position="131"/>
    </location>
</feature>
<feature type="strand" evidence="17">
    <location>
        <begin position="135"/>
        <end position="142"/>
    </location>
</feature>
<feature type="helix" evidence="17">
    <location>
        <begin position="143"/>
        <end position="146"/>
    </location>
</feature>
<feature type="strand" evidence="17">
    <location>
        <begin position="152"/>
        <end position="154"/>
    </location>
</feature>
<feature type="helix" evidence="17">
    <location>
        <begin position="165"/>
        <end position="184"/>
    </location>
</feature>
<feature type="strand" evidence="17">
    <location>
        <begin position="189"/>
        <end position="193"/>
    </location>
</feature>
<feature type="helix" evidence="17">
    <location>
        <begin position="210"/>
        <end position="220"/>
    </location>
</feature>
<feature type="strand" evidence="17">
    <location>
        <begin position="225"/>
        <end position="230"/>
    </location>
</feature>
<feature type="helix" evidence="17">
    <location>
        <begin position="239"/>
        <end position="250"/>
    </location>
</feature>
<feature type="helix" evidence="17">
    <location>
        <begin position="254"/>
        <end position="256"/>
    </location>
</feature>
<feature type="strand" evidence="17">
    <location>
        <begin position="258"/>
        <end position="264"/>
    </location>
</feature>
<feature type="helix" evidence="17">
    <location>
        <begin position="271"/>
        <end position="284"/>
    </location>
</feature>
<feature type="strand" evidence="17">
    <location>
        <begin position="294"/>
        <end position="296"/>
    </location>
</feature>
<feature type="helix" evidence="17">
    <location>
        <begin position="311"/>
        <end position="316"/>
    </location>
</feature>
<feature type="helix" evidence="17">
    <location>
        <begin position="325"/>
        <end position="339"/>
    </location>
</feature>
<accession>Q8KN66</accession>
<accession>Q9RHD6</accession>
<dbReference type="EC" id="5.1.3.45" evidence="6"/>
<dbReference type="EC" id="5.1.3.7" evidence="3 4 5"/>
<dbReference type="EMBL" id="AF035937">
    <property type="protein sequence ID" value="AAF23998.1"/>
    <property type="molecule type" value="Genomic_DNA"/>
</dbReference>
<dbReference type="EMBL" id="AF498417">
    <property type="protein sequence ID" value="AAM27817.1"/>
    <property type="molecule type" value="Genomic_DNA"/>
</dbReference>
<dbReference type="PDB" id="1SB8">
    <property type="method" value="X-ray"/>
    <property type="resolution" value="2.10 A"/>
    <property type="chains" value="A=1-341"/>
</dbReference>
<dbReference type="PDB" id="1SB9">
    <property type="method" value="X-ray"/>
    <property type="resolution" value="2.50 A"/>
    <property type="chains" value="A=1-341"/>
</dbReference>
<dbReference type="PDBsum" id="1SB8"/>
<dbReference type="PDBsum" id="1SB9"/>
<dbReference type="SMR" id="Q8KN66"/>
<dbReference type="DrugBank" id="DB01861">
    <property type="generic name" value="Uridine diphosphate glucose"/>
</dbReference>
<dbReference type="DrugBank" id="DB02196">
    <property type="generic name" value="Uridine-Diphosphate-N-Acetylgalactosamine"/>
</dbReference>
<dbReference type="BioCyc" id="MetaCyc:MONOMER-13182"/>
<dbReference type="BRENDA" id="5.1.3.7">
    <property type="organism ID" value="5087"/>
</dbReference>
<dbReference type="UniPathway" id="UPA00281"/>
<dbReference type="EvolutionaryTrace" id="Q8KN66"/>
<dbReference type="GO" id="GO:0016853">
    <property type="term" value="F:isomerase activity"/>
    <property type="evidence" value="ECO:0007669"/>
    <property type="project" value="UniProtKB-KW"/>
</dbReference>
<dbReference type="GO" id="GO:0000166">
    <property type="term" value="F:nucleotide binding"/>
    <property type="evidence" value="ECO:0007669"/>
    <property type="project" value="UniProtKB-KW"/>
</dbReference>
<dbReference type="GO" id="GO:0071555">
    <property type="term" value="P:cell wall organization"/>
    <property type="evidence" value="ECO:0007669"/>
    <property type="project" value="UniProtKB-KW"/>
</dbReference>
<dbReference type="GO" id="GO:0009103">
    <property type="term" value="P:lipopolysaccharide biosynthetic process"/>
    <property type="evidence" value="ECO:0007669"/>
    <property type="project" value="UniProtKB-KW"/>
</dbReference>
<dbReference type="CDD" id="cd05256">
    <property type="entry name" value="UDP_AE_SDR_e"/>
    <property type="match status" value="1"/>
</dbReference>
<dbReference type="Gene3D" id="3.40.50.720">
    <property type="entry name" value="NAD(P)-binding Rossmann-like Domain"/>
    <property type="match status" value="1"/>
</dbReference>
<dbReference type="Gene3D" id="3.90.25.10">
    <property type="entry name" value="UDP-galactose 4-epimerase, domain 1"/>
    <property type="match status" value="1"/>
</dbReference>
<dbReference type="InterPro" id="IPR001509">
    <property type="entry name" value="Epimerase_deHydtase"/>
</dbReference>
<dbReference type="InterPro" id="IPR036291">
    <property type="entry name" value="NAD(P)-bd_dom_sf"/>
</dbReference>
<dbReference type="PANTHER" id="PTHR43000">
    <property type="entry name" value="DTDP-D-GLUCOSE 4,6-DEHYDRATASE-RELATED"/>
    <property type="match status" value="1"/>
</dbReference>
<dbReference type="Pfam" id="PF01370">
    <property type="entry name" value="Epimerase"/>
    <property type="match status" value="1"/>
</dbReference>
<dbReference type="PRINTS" id="PR01713">
    <property type="entry name" value="NUCEPIMERASE"/>
</dbReference>
<dbReference type="SUPFAM" id="SSF51735">
    <property type="entry name" value="NAD(P)-binding Rossmann-fold domains"/>
    <property type="match status" value="1"/>
</dbReference>
<proteinExistence type="evidence at protein level"/>